<protein>
    <recommendedName>
        <fullName evidence="1">UPF0266 membrane protein YobD</fullName>
    </recommendedName>
</protein>
<keyword id="KW-0997">Cell inner membrane</keyword>
<keyword id="KW-1003">Cell membrane</keyword>
<keyword id="KW-0472">Membrane</keyword>
<keyword id="KW-0812">Transmembrane</keyword>
<keyword id="KW-1133">Transmembrane helix</keyword>
<gene>
    <name evidence="1" type="primary">yobD</name>
    <name type="ordered locus">EcSMS35_1368</name>
</gene>
<reference key="1">
    <citation type="journal article" date="2008" name="J. Bacteriol.">
        <title>Insights into the environmental resistance gene pool from the genome sequence of the multidrug-resistant environmental isolate Escherichia coli SMS-3-5.</title>
        <authorList>
            <person name="Fricke W.F."/>
            <person name="Wright M.S."/>
            <person name="Lindell A.H."/>
            <person name="Harkins D.M."/>
            <person name="Baker-Austin C."/>
            <person name="Ravel J."/>
            <person name="Stepanauskas R."/>
        </authorList>
    </citation>
    <scope>NUCLEOTIDE SEQUENCE [LARGE SCALE GENOMIC DNA]</scope>
    <source>
        <strain>SMS-3-5 / SECEC</strain>
    </source>
</reference>
<name>YOBD_ECOSM</name>
<proteinExistence type="inferred from homology"/>
<evidence type="ECO:0000255" key="1">
    <source>
        <dbReference type="HAMAP-Rule" id="MF_01071"/>
    </source>
</evidence>
<comment type="subcellular location">
    <subcellularLocation>
        <location evidence="1">Cell inner membrane</location>
        <topology evidence="1">Multi-pass membrane protein</topology>
    </subcellularLocation>
</comment>
<comment type="similarity">
    <text evidence="1">Belongs to the UPF0266 family.</text>
</comment>
<accession>B1LD53</accession>
<sequence length="152" mass="17615">MTITDLVLILFIAALLAFAIYDQFIMPRRNGPTLLAIPLLRRGRIDSVIFVGLIVILIYNNVTNHGALITTWLLSALALMGFYIFWIRVPKIIFKQKGFFFANVWIEYSRIKAMNLSEDGVLVMQLEQRRLLIRVRNIDDLEKIYKLLVSTQ</sequence>
<organism>
    <name type="scientific">Escherichia coli (strain SMS-3-5 / SECEC)</name>
    <dbReference type="NCBI Taxonomy" id="439855"/>
    <lineage>
        <taxon>Bacteria</taxon>
        <taxon>Pseudomonadati</taxon>
        <taxon>Pseudomonadota</taxon>
        <taxon>Gammaproteobacteria</taxon>
        <taxon>Enterobacterales</taxon>
        <taxon>Enterobacteriaceae</taxon>
        <taxon>Escherichia</taxon>
    </lineage>
</organism>
<feature type="chain" id="PRO_1000136642" description="UPF0266 membrane protein YobD">
    <location>
        <begin position="1"/>
        <end position="152"/>
    </location>
</feature>
<feature type="transmembrane region" description="Helical" evidence="1">
    <location>
        <begin position="6"/>
        <end position="26"/>
    </location>
</feature>
<feature type="transmembrane region" description="Helical" evidence="1">
    <location>
        <begin position="45"/>
        <end position="65"/>
    </location>
</feature>
<feature type="transmembrane region" description="Helical" evidence="1">
    <location>
        <begin position="67"/>
        <end position="87"/>
    </location>
</feature>
<dbReference type="EMBL" id="CP000970">
    <property type="protein sequence ID" value="ACB18738.1"/>
    <property type="molecule type" value="Genomic_DNA"/>
</dbReference>
<dbReference type="RefSeq" id="WP_000156255.1">
    <property type="nucleotide sequence ID" value="NC_010498.1"/>
</dbReference>
<dbReference type="KEGG" id="ecm:EcSMS35_1368"/>
<dbReference type="HOGENOM" id="CLU_133645_0_0_6"/>
<dbReference type="Proteomes" id="UP000007011">
    <property type="component" value="Chromosome"/>
</dbReference>
<dbReference type="GO" id="GO:0005886">
    <property type="term" value="C:plasma membrane"/>
    <property type="evidence" value="ECO:0007669"/>
    <property type="project" value="UniProtKB-SubCell"/>
</dbReference>
<dbReference type="HAMAP" id="MF_01071">
    <property type="entry name" value="UPF0266"/>
    <property type="match status" value="1"/>
</dbReference>
<dbReference type="InterPro" id="IPR009328">
    <property type="entry name" value="DUF986"/>
</dbReference>
<dbReference type="NCBIfam" id="NF002791">
    <property type="entry name" value="PRK02913.1"/>
    <property type="match status" value="1"/>
</dbReference>
<dbReference type="Pfam" id="PF06173">
    <property type="entry name" value="DUF986"/>
    <property type="match status" value="1"/>
</dbReference>
<dbReference type="PIRSF" id="PIRSF020687">
    <property type="entry name" value="UCP020687"/>
    <property type="match status" value="1"/>
</dbReference>